<reference key="1">
    <citation type="journal article" date="2008" name="Cell. Mol. Life Sci.">
        <title>Common evolution of waprin and Kunitz-like toxin families in Australian venomous snakes.</title>
        <authorList>
            <person name="St Pierre L."/>
            <person name="Earl S.T."/>
            <person name="Filippovich I."/>
            <person name="Sorokina N."/>
            <person name="Masci P.P."/>
            <person name="De Jersey J."/>
            <person name="Lavin M.F."/>
        </authorList>
    </citation>
    <scope>NUCLEOTIDE SEQUENCE [GENOMIC DNA / MRNA]</scope>
    <source>
        <tissue>Venom gland</tissue>
    </source>
</reference>
<evidence type="ECO:0000250" key="1"/>
<evidence type="ECO:0000255" key="2"/>
<evidence type="ECO:0000255" key="3">
    <source>
        <dbReference type="PROSITE-ProRule" id="PRU00031"/>
    </source>
</evidence>
<evidence type="ECO:0000305" key="4"/>
<accession>B5G6G6</accession>
<organism>
    <name type="scientific">Pseudechis porphyriacus</name>
    <name type="common">Red-bellied black snake</name>
    <dbReference type="NCBI Taxonomy" id="8671"/>
    <lineage>
        <taxon>Eukaryota</taxon>
        <taxon>Metazoa</taxon>
        <taxon>Chordata</taxon>
        <taxon>Craniata</taxon>
        <taxon>Vertebrata</taxon>
        <taxon>Euteleostomi</taxon>
        <taxon>Lepidosauria</taxon>
        <taxon>Squamata</taxon>
        <taxon>Bifurcata</taxon>
        <taxon>Unidentata</taxon>
        <taxon>Episquamata</taxon>
        <taxon>Toxicofera</taxon>
        <taxon>Serpentes</taxon>
        <taxon>Colubroidea</taxon>
        <taxon>Elapidae</taxon>
        <taxon>Hydrophiinae</taxon>
        <taxon>Pseudechis</taxon>
    </lineage>
</organism>
<proteinExistence type="evidence at transcript level"/>
<comment type="function">
    <text evidence="1">Serine protease inhibitor.</text>
</comment>
<comment type="subcellular location">
    <subcellularLocation>
        <location evidence="1">Secreted</location>
    </subcellularLocation>
</comment>
<comment type="tissue specificity">
    <text>Expressed by the venom gland.</text>
</comment>
<comment type="similarity">
    <text evidence="4">Belongs to the venom Kunitz-type family.</text>
</comment>
<sequence>MSSGGLLLLLGLLTLWEGLTPVSSKDRPDFCELPDDRGPCRGIFHAFYYNPDQRQCLEFIYGGCYGNANNFKTIDECKRTCAA</sequence>
<protein>
    <recommendedName>
        <fullName>Kunitz-type serine protease inhibitor blackelin-2</fullName>
    </recommendedName>
</protein>
<dbReference type="EMBL" id="DQ917551">
    <property type="protein sequence ID" value="ABK63580.1"/>
    <property type="molecule type" value="mRNA"/>
</dbReference>
<dbReference type="EMBL" id="EU401847">
    <property type="protein sequence ID" value="ACC77796.1"/>
    <property type="molecule type" value="Genomic_DNA"/>
</dbReference>
<dbReference type="SMR" id="B5G6G6"/>
<dbReference type="MEROPS" id="I02.052"/>
<dbReference type="GO" id="GO:0005615">
    <property type="term" value="C:extracellular space"/>
    <property type="evidence" value="ECO:0007669"/>
    <property type="project" value="TreeGrafter"/>
</dbReference>
<dbReference type="GO" id="GO:0004867">
    <property type="term" value="F:serine-type endopeptidase inhibitor activity"/>
    <property type="evidence" value="ECO:0007669"/>
    <property type="project" value="UniProtKB-KW"/>
</dbReference>
<dbReference type="CDD" id="cd22594">
    <property type="entry name" value="Kunitz_textilinin-like"/>
    <property type="match status" value="1"/>
</dbReference>
<dbReference type="FunFam" id="4.10.410.10:FF:000021">
    <property type="entry name" value="Serine protease inhibitor, putative"/>
    <property type="match status" value="1"/>
</dbReference>
<dbReference type="Gene3D" id="4.10.410.10">
    <property type="entry name" value="Pancreatic trypsin inhibitor Kunitz domain"/>
    <property type="match status" value="1"/>
</dbReference>
<dbReference type="InterPro" id="IPR002223">
    <property type="entry name" value="Kunitz_BPTI"/>
</dbReference>
<dbReference type="InterPro" id="IPR036880">
    <property type="entry name" value="Kunitz_BPTI_sf"/>
</dbReference>
<dbReference type="InterPro" id="IPR020901">
    <property type="entry name" value="Prtase_inh_Kunz-CS"/>
</dbReference>
<dbReference type="InterPro" id="IPR050098">
    <property type="entry name" value="TFPI/VKTCI-like"/>
</dbReference>
<dbReference type="PANTHER" id="PTHR10083">
    <property type="entry name" value="KUNITZ-TYPE PROTEASE INHIBITOR-RELATED"/>
    <property type="match status" value="1"/>
</dbReference>
<dbReference type="PANTHER" id="PTHR10083:SF376">
    <property type="entry name" value="SERINE PEPTIDASE INHIBITOR, KUNITZ TYPE, 3"/>
    <property type="match status" value="1"/>
</dbReference>
<dbReference type="Pfam" id="PF00014">
    <property type="entry name" value="Kunitz_BPTI"/>
    <property type="match status" value="1"/>
</dbReference>
<dbReference type="PRINTS" id="PR00759">
    <property type="entry name" value="BASICPTASE"/>
</dbReference>
<dbReference type="SMART" id="SM00131">
    <property type="entry name" value="KU"/>
    <property type="match status" value="1"/>
</dbReference>
<dbReference type="SUPFAM" id="SSF57362">
    <property type="entry name" value="BPTI-like"/>
    <property type="match status" value="1"/>
</dbReference>
<dbReference type="PROSITE" id="PS00280">
    <property type="entry name" value="BPTI_KUNITZ_1"/>
    <property type="match status" value="1"/>
</dbReference>
<dbReference type="PROSITE" id="PS50279">
    <property type="entry name" value="BPTI_KUNITZ_2"/>
    <property type="match status" value="1"/>
</dbReference>
<name>VKT2_PSEPO</name>
<keyword id="KW-1015">Disulfide bond</keyword>
<keyword id="KW-0646">Protease inhibitor</keyword>
<keyword id="KW-0964">Secreted</keyword>
<keyword id="KW-0722">Serine protease inhibitor</keyword>
<keyword id="KW-0732">Signal</keyword>
<feature type="signal peptide" evidence="2">
    <location>
        <begin position="1"/>
        <end position="24"/>
    </location>
</feature>
<feature type="chain" id="PRO_5000395566" description="Kunitz-type serine protease inhibitor blackelin-2">
    <location>
        <begin position="25"/>
        <end position="83"/>
    </location>
</feature>
<feature type="domain" description="BPTI/Kunitz inhibitor" evidence="3">
    <location>
        <begin position="31"/>
        <end position="81"/>
    </location>
</feature>
<feature type="site" description="Reactive bond for trypsin" evidence="1">
    <location>
        <begin position="41"/>
        <end position="42"/>
    </location>
</feature>
<feature type="disulfide bond" evidence="3">
    <location>
        <begin position="31"/>
        <end position="81"/>
    </location>
</feature>
<feature type="disulfide bond" evidence="3">
    <location>
        <begin position="40"/>
        <end position="64"/>
    </location>
</feature>
<feature type="disulfide bond" evidence="3">
    <location>
        <begin position="56"/>
        <end position="77"/>
    </location>
</feature>